<name>RSMB_ECOBW</name>
<feature type="chain" id="PRO_1000216152" description="Ribosomal RNA small subunit methyltransferase B">
    <location>
        <begin position="1"/>
        <end position="429"/>
    </location>
</feature>
<feature type="active site" description="Nucleophile" evidence="1">
    <location>
        <position position="375"/>
    </location>
</feature>
<feature type="binding site" evidence="1">
    <location>
        <begin position="254"/>
        <end position="260"/>
    </location>
    <ligand>
        <name>S-adenosyl-L-methionine</name>
        <dbReference type="ChEBI" id="CHEBI:59789"/>
    </ligand>
</feature>
<feature type="binding site" evidence="1">
    <location>
        <position position="277"/>
    </location>
    <ligand>
        <name>S-adenosyl-L-methionine</name>
        <dbReference type="ChEBI" id="CHEBI:59789"/>
    </ligand>
</feature>
<feature type="binding site" evidence="1">
    <location>
        <position position="303"/>
    </location>
    <ligand>
        <name>S-adenosyl-L-methionine</name>
        <dbReference type="ChEBI" id="CHEBI:59789"/>
    </ligand>
</feature>
<feature type="binding site" evidence="1">
    <location>
        <position position="322"/>
    </location>
    <ligand>
        <name>S-adenosyl-L-methionine</name>
        <dbReference type="ChEBI" id="CHEBI:59789"/>
    </ligand>
</feature>
<sequence length="429" mass="48348">MKKQRNLRSMAAQAVEQVVEQGQSLSNILPPLQQKVSDKDKALLQELCFGVLRTLSQLDWLINKLMARPMTGKQRTVHYLIMVGLYQLLYTRIPPHAALAETVEGAIAIKRPQLKGLINGVLRQFQRQQEELLAEFNASDARYLHPSWLLKRLQKAYPEQWQSIVEANNQRPPMWLRINRTHHSRDSWLALLDEAGMKGFPHADYPDAVRLETPAPVHALPGFEDGWVTVQDASAQGCMTWLAPQNGEHILDLCAAPGGKTTHILEVAPEAQVVAVDIDEQRLSRVYDNLKRLGMKATVKQGDGRYPSQWCGEQQFDRILLDAPCSATGVIRRHPDIKWLRRDRDIPELAQLQSEILDAIWPHLKTGGTLVYATCSVLPEENSLQIKAFLQRTADAELCETGTPEQPGKQNLPGAEEGDGFFYAKLIKK</sequence>
<evidence type="ECO:0000255" key="1">
    <source>
        <dbReference type="HAMAP-Rule" id="MF_01856"/>
    </source>
</evidence>
<proteinExistence type="inferred from homology"/>
<gene>
    <name evidence="1" type="primary">rsmB</name>
    <name evidence="1" type="synonym">sun</name>
    <name type="ordered locus">BWG_2979</name>
</gene>
<keyword id="KW-0963">Cytoplasm</keyword>
<keyword id="KW-0489">Methyltransferase</keyword>
<keyword id="KW-0694">RNA-binding</keyword>
<keyword id="KW-0698">rRNA processing</keyword>
<keyword id="KW-0949">S-adenosyl-L-methionine</keyword>
<keyword id="KW-0808">Transferase</keyword>
<comment type="function">
    <text evidence="1">Specifically methylates the cytosine at position 967 (m5C967) of 16S rRNA.</text>
</comment>
<comment type="catalytic activity">
    <reaction evidence="1">
        <text>cytidine(967) in 16S rRNA + S-adenosyl-L-methionine = 5-methylcytidine(967) in 16S rRNA + S-adenosyl-L-homocysteine + H(+)</text>
        <dbReference type="Rhea" id="RHEA:42748"/>
        <dbReference type="Rhea" id="RHEA-COMP:10219"/>
        <dbReference type="Rhea" id="RHEA-COMP:10220"/>
        <dbReference type="ChEBI" id="CHEBI:15378"/>
        <dbReference type="ChEBI" id="CHEBI:57856"/>
        <dbReference type="ChEBI" id="CHEBI:59789"/>
        <dbReference type="ChEBI" id="CHEBI:74483"/>
        <dbReference type="ChEBI" id="CHEBI:82748"/>
        <dbReference type="EC" id="2.1.1.176"/>
    </reaction>
</comment>
<comment type="subcellular location">
    <subcellularLocation>
        <location evidence="1">Cytoplasm</location>
    </subcellularLocation>
</comment>
<comment type="similarity">
    <text evidence="1">Belongs to the class I-like SAM-binding methyltransferase superfamily. RsmB/NOP family.</text>
</comment>
<protein>
    <recommendedName>
        <fullName evidence="1">Ribosomal RNA small subunit methyltransferase B</fullName>
        <ecNumber evidence="1">2.1.1.176</ecNumber>
    </recommendedName>
    <alternativeName>
        <fullName evidence="1">16S rRNA m5C967 methyltransferase</fullName>
    </alternativeName>
    <alternativeName>
        <fullName evidence="1">rRNA (cytosine-C(5)-)-methyltransferase RsmB</fullName>
    </alternativeName>
</protein>
<organism>
    <name type="scientific">Escherichia coli (strain K12 / MC4100 / BW2952)</name>
    <dbReference type="NCBI Taxonomy" id="595496"/>
    <lineage>
        <taxon>Bacteria</taxon>
        <taxon>Pseudomonadati</taxon>
        <taxon>Pseudomonadota</taxon>
        <taxon>Gammaproteobacteria</taxon>
        <taxon>Enterobacterales</taxon>
        <taxon>Enterobacteriaceae</taxon>
        <taxon>Escherichia</taxon>
    </lineage>
</organism>
<dbReference type="EC" id="2.1.1.176" evidence="1"/>
<dbReference type="EMBL" id="CP001396">
    <property type="protein sequence ID" value="ACR61732.1"/>
    <property type="molecule type" value="Genomic_DNA"/>
</dbReference>
<dbReference type="RefSeq" id="WP_000744778.1">
    <property type="nucleotide sequence ID" value="NC_012759.1"/>
</dbReference>
<dbReference type="SMR" id="C4ZUE3"/>
<dbReference type="KEGG" id="ebw:BWG_2979"/>
<dbReference type="HOGENOM" id="CLU_005316_0_4_6"/>
<dbReference type="GO" id="GO:0005829">
    <property type="term" value="C:cytosol"/>
    <property type="evidence" value="ECO:0007669"/>
    <property type="project" value="TreeGrafter"/>
</dbReference>
<dbReference type="GO" id="GO:0003723">
    <property type="term" value="F:RNA binding"/>
    <property type="evidence" value="ECO:0007669"/>
    <property type="project" value="UniProtKB-KW"/>
</dbReference>
<dbReference type="GO" id="GO:0009383">
    <property type="term" value="F:rRNA (cytosine-C5-)-methyltransferase activity"/>
    <property type="evidence" value="ECO:0007669"/>
    <property type="project" value="TreeGrafter"/>
</dbReference>
<dbReference type="GO" id="GO:0006355">
    <property type="term" value="P:regulation of DNA-templated transcription"/>
    <property type="evidence" value="ECO:0007669"/>
    <property type="project" value="InterPro"/>
</dbReference>
<dbReference type="GO" id="GO:0070475">
    <property type="term" value="P:rRNA base methylation"/>
    <property type="evidence" value="ECO:0007669"/>
    <property type="project" value="TreeGrafter"/>
</dbReference>
<dbReference type="CDD" id="cd02440">
    <property type="entry name" value="AdoMet_MTases"/>
    <property type="match status" value="1"/>
</dbReference>
<dbReference type="CDD" id="cd00620">
    <property type="entry name" value="Methyltransferase_Sun"/>
    <property type="match status" value="1"/>
</dbReference>
<dbReference type="FunFam" id="1.10.287.730:FF:000001">
    <property type="entry name" value="Ribosomal RNA small subunit methyltransferase B"/>
    <property type="match status" value="1"/>
</dbReference>
<dbReference type="FunFam" id="1.10.940.10:FF:000002">
    <property type="entry name" value="Ribosomal RNA small subunit methyltransferase B"/>
    <property type="match status" value="1"/>
</dbReference>
<dbReference type="FunFam" id="3.30.70.1170:FF:000002">
    <property type="entry name" value="Ribosomal RNA small subunit methyltransferase B"/>
    <property type="match status" value="1"/>
</dbReference>
<dbReference type="FunFam" id="3.40.50.150:FF:000022">
    <property type="entry name" value="Ribosomal RNA small subunit methyltransferase B"/>
    <property type="match status" value="1"/>
</dbReference>
<dbReference type="Gene3D" id="1.10.287.730">
    <property type="entry name" value="Helix hairpin bin"/>
    <property type="match status" value="1"/>
</dbReference>
<dbReference type="Gene3D" id="1.10.940.10">
    <property type="entry name" value="NusB-like"/>
    <property type="match status" value="1"/>
</dbReference>
<dbReference type="Gene3D" id="3.30.70.1170">
    <property type="entry name" value="Sun protein, domain 3"/>
    <property type="match status" value="1"/>
</dbReference>
<dbReference type="Gene3D" id="3.40.50.150">
    <property type="entry name" value="Vaccinia Virus protein VP39"/>
    <property type="match status" value="1"/>
</dbReference>
<dbReference type="HAMAP" id="MF_01856">
    <property type="entry name" value="16SrRNA_methyltr_B"/>
    <property type="match status" value="1"/>
</dbReference>
<dbReference type="InterPro" id="IPR049560">
    <property type="entry name" value="MeTrfase_RsmB-F_NOP2_cat"/>
</dbReference>
<dbReference type="InterPro" id="IPR001678">
    <property type="entry name" value="MeTrfase_RsmB-F_NOP2_dom"/>
</dbReference>
<dbReference type="InterPro" id="IPR035926">
    <property type="entry name" value="NusB-like_sf"/>
</dbReference>
<dbReference type="InterPro" id="IPR006027">
    <property type="entry name" value="NusB_RsmB_TIM44"/>
</dbReference>
<dbReference type="InterPro" id="IPR023267">
    <property type="entry name" value="RCMT"/>
</dbReference>
<dbReference type="InterPro" id="IPR004573">
    <property type="entry name" value="rRNA_ssu_MeTfrase_B"/>
</dbReference>
<dbReference type="InterPro" id="IPR023541">
    <property type="entry name" value="rRNA_ssu_MeTfrase_B_ent"/>
</dbReference>
<dbReference type="InterPro" id="IPR054728">
    <property type="entry name" value="RsmB-like_ferredoxin"/>
</dbReference>
<dbReference type="InterPro" id="IPR048019">
    <property type="entry name" value="RsmB-like_N"/>
</dbReference>
<dbReference type="InterPro" id="IPR018314">
    <property type="entry name" value="RsmB/NOL1/NOP2-like_CS"/>
</dbReference>
<dbReference type="InterPro" id="IPR029063">
    <property type="entry name" value="SAM-dependent_MTases_sf"/>
</dbReference>
<dbReference type="NCBIfam" id="NF008149">
    <property type="entry name" value="PRK10901.1"/>
    <property type="match status" value="1"/>
</dbReference>
<dbReference type="NCBIfam" id="NF011494">
    <property type="entry name" value="PRK14902.1"/>
    <property type="match status" value="1"/>
</dbReference>
<dbReference type="NCBIfam" id="TIGR00563">
    <property type="entry name" value="rsmB"/>
    <property type="match status" value="1"/>
</dbReference>
<dbReference type="PANTHER" id="PTHR22807:SF61">
    <property type="entry name" value="NOL1_NOP2_SUN FAMILY PROTEIN _ ANTITERMINATION NUSB DOMAIN-CONTAINING PROTEIN"/>
    <property type="match status" value="1"/>
</dbReference>
<dbReference type="PANTHER" id="PTHR22807">
    <property type="entry name" value="NOP2 YEAST -RELATED NOL1/NOP2/FMU SUN DOMAIN-CONTAINING"/>
    <property type="match status" value="1"/>
</dbReference>
<dbReference type="Pfam" id="PF01189">
    <property type="entry name" value="Methyltr_RsmB-F"/>
    <property type="match status" value="1"/>
</dbReference>
<dbReference type="Pfam" id="PF01029">
    <property type="entry name" value="NusB"/>
    <property type="match status" value="1"/>
</dbReference>
<dbReference type="Pfam" id="PF22458">
    <property type="entry name" value="RsmF-B_ferredox"/>
    <property type="match status" value="1"/>
</dbReference>
<dbReference type="PRINTS" id="PR02008">
    <property type="entry name" value="RCMTFAMILY"/>
</dbReference>
<dbReference type="SUPFAM" id="SSF48013">
    <property type="entry name" value="NusB-like"/>
    <property type="match status" value="1"/>
</dbReference>
<dbReference type="SUPFAM" id="SSF53335">
    <property type="entry name" value="S-adenosyl-L-methionine-dependent methyltransferases"/>
    <property type="match status" value="1"/>
</dbReference>
<dbReference type="PROSITE" id="PS01153">
    <property type="entry name" value="NOL1_NOP2_SUN"/>
    <property type="match status" value="1"/>
</dbReference>
<dbReference type="PROSITE" id="PS51686">
    <property type="entry name" value="SAM_MT_RSMB_NOP"/>
    <property type="match status" value="1"/>
</dbReference>
<reference key="1">
    <citation type="journal article" date="2009" name="J. Bacteriol.">
        <title>Genomic sequencing reveals regulatory mutations and recombinational events in the widely used MC4100 lineage of Escherichia coli K-12.</title>
        <authorList>
            <person name="Ferenci T."/>
            <person name="Zhou Z."/>
            <person name="Betteridge T."/>
            <person name="Ren Y."/>
            <person name="Liu Y."/>
            <person name="Feng L."/>
            <person name="Reeves P.R."/>
            <person name="Wang L."/>
        </authorList>
    </citation>
    <scope>NUCLEOTIDE SEQUENCE [LARGE SCALE GENOMIC DNA]</scope>
    <source>
        <strain>K12 / MC4100 / BW2952</strain>
    </source>
</reference>
<accession>C4ZUE3</accession>